<keyword id="KW-0002">3D-structure</keyword>
<keyword id="KW-1157">Cap snatching</keyword>
<keyword id="KW-1048">Host nucleus</keyword>
<keyword id="KW-0506">mRNA capping</keyword>
<keyword id="KW-0507">mRNA processing</keyword>
<keyword id="KW-1185">Reference proteome</keyword>
<keyword id="KW-0946">Virion</keyword>
<name>PB2_THOGV</name>
<gene>
    <name type="ordered locus">Segment 1</name>
</gene>
<sequence length="769" mass="88043">MDREEPAESECTLRALVEEYNGACKEAPKEMSKQFTDYNTFKRYTTSKKDHAPQMRLVYSVRKPWPISMTPSKEIPLVFNGTKLKDTILDLGESKRTRANIVVPDYWSKYGSQTSLEVVNAILYAEDLKVQRFFSTEWGEIRYGRMLPFRKPVQACPTIEEVNPASIPHTLLQVFCPQYTTLDSKRKAHMGAVEKLKRVMEPICKVQTQESAVHIARSLIDSNKKWLPTVVDHTPRTAEMAHFLCSKYHYVHTNTQDLSDTRSIDNLCGELVKRSLKCRCPKETLVANLDKITIQGRPMREVLADHDGELPYLGICRVAMGLSTHHTMKIRSTKFSILNSDHPRIEVKKVFSLSPDVQVTIPYRRFKGKAKVYFQNDQIQGYFSCTDRQIDEIKISAPKNAPLLEPLLDICYYGSFIEPGFEQTFGFYPAGKREFVDSFFMHHSKDHKAFLIHMGLDKDLSLPLSPELNWKEPALSKVCRVTELDSTVQPYTSATREFVLGETLNVYTQHENGLELLICPTEIRSTRGPLPPGTNLSGSEFIDIYQDPFSRAKSLLKSTILHAERCKEFVGNMLEEYQDPAETTVQSLVPINTWGKSAKRKLQEEITSDPDWHQCPRKRAKMSYLAIIAGSIQDRDKKQTNVPRAFMLRGSQIEYDMKATRGLVVDTTNRIIVGGETVLREGKGGPEGYVQTGVFEEQPRCYLVDTPDHGLSMGLSRFCVHSQGRYFQYEKKISIWEETDNIKATIDSQRDLKRRRDIEEMVSKRARIV</sequence>
<organismHost>
    <name type="scientific">Amblyomma variegatum</name>
    <name type="common">Tropical bont tick</name>
    <dbReference type="NCBI Taxonomy" id="34610"/>
</organismHost>
<organismHost>
    <name type="scientific">Cavia cutleri</name>
    <name type="common">Guinea pig</name>
    <dbReference type="NCBI Taxonomy" id="10144"/>
</organismHost>
<organismHost>
    <name type="scientific">Mungos mungo</name>
    <name type="common">Banded mongoose</name>
    <dbReference type="NCBI Taxonomy" id="210652"/>
</organismHost>
<organismHost>
    <name type="scientific">Rhipicephalus appendiculatus</name>
    <name type="common">Brown ear tick</name>
    <dbReference type="NCBI Taxonomy" id="34631"/>
</organismHost>
<organismHost>
    <name type="scientific">Rhipicephalus microplus</name>
    <name type="common">Cattle tick</name>
    <name type="synonym">Boophilus microplus</name>
    <dbReference type="NCBI Taxonomy" id="6941"/>
</organismHost>
<evidence type="ECO:0000250" key="1"/>
<evidence type="ECO:0000250" key="2">
    <source>
        <dbReference type="UniProtKB" id="P03428"/>
    </source>
</evidence>
<evidence type="ECO:0000250" key="3">
    <source>
        <dbReference type="UniProtKB" id="P03431"/>
    </source>
</evidence>
<evidence type="ECO:0000303" key="4">
    <source>
    </source>
</evidence>
<evidence type="ECO:0000305" key="5"/>
<evidence type="ECO:0007829" key="6">
    <source>
        <dbReference type="PDB" id="4CHD"/>
    </source>
</evidence>
<evidence type="ECO:0007829" key="7">
    <source>
        <dbReference type="PDB" id="4CHE"/>
    </source>
</evidence>
<evidence type="ECO:0007829" key="8">
    <source>
        <dbReference type="PDB" id="8Z85"/>
    </source>
</evidence>
<evidence type="ECO:0007829" key="9">
    <source>
        <dbReference type="PDB" id="8Z90"/>
    </source>
</evidence>
<evidence type="ECO:0007829" key="10">
    <source>
        <dbReference type="PDB" id="8Z97"/>
    </source>
</evidence>
<evidence type="ECO:0007829" key="11">
    <source>
        <dbReference type="PDB" id="8Z9H"/>
    </source>
</evidence>
<evidence type="ECO:0007829" key="12">
    <source>
        <dbReference type="PDB" id="8Z9Q"/>
    </source>
</evidence>
<evidence type="ECO:0007829" key="13">
    <source>
        <dbReference type="PDB" id="8Z9R"/>
    </source>
</evidence>
<proteinExistence type="evidence at protein level"/>
<dbReference type="EMBL" id="Y17873">
    <property type="protein sequence ID" value="CAA76908.1"/>
    <property type="molecule type" value="Genomic_RNA"/>
</dbReference>
<dbReference type="RefSeq" id="YP_145810.1">
    <property type="nucleotide sequence ID" value="NC_006508.1"/>
</dbReference>
<dbReference type="PDB" id="4CHD">
    <property type="method" value="X-ray"/>
    <property type="resolution" value="2.40 A"/>
    <property type="chains" value="A=543-701"/>
</dbReference>
<dbReference type="PDB" id="4CHE">
    <property type="method" value="X-ray"/>
    <property type="resolution" value="1.80 A"/>
    <property type="chains" value="A=323-486"/>
</dbReference>
<dbReference type="PDB" id="4CHF">
    <property type="method" value="X-ray"/>
    <property type="resolution" value="3.00 A"/>
    <property type="chains" value="A/B=323-486"/>
</dbReference>
<dbReference type="PDB" id="8P0B">
    <property type="method" value="EM"/>
    <property type="resolution" value="2.87 A"/>
    <property type="chains" value="C=1-769"/>
</dbReference>
<dbReference type="PDB" id="8P0G">
    <property type="method" value="EM"/>
    <property type="resolution" value="3.17 A"/>
    <property type="chains" value="C=1-769"/>
</dbReference>
<dbReference type="PDB" id="8P0U">
    <property type="method" value="EM"/>
    <property type="resolution" value="2.92 A"/>
    <property type="chains" value="C=1-769"/>
</dbReference>
<dbReference type="PDB" id="8Z85">
    <property type="method" value="EM"/>
    <property type="resolution" value="2.30 A"/>
    <property type="chains" value="C=1-769"/>
</dbReference>
<dbReference type="PDB" id="8Z8J">
    <property type="method" value="EM"/>
    <property type="resolution" value="3.16 A"/>
    <property type="chains" value="C=1-769"/>
</dbReference>
<dbReference type="PDB" id="8Z8N">
    <property type="method" value="EM"/>
    <property type="resolution" value="2.79 A"/>
    <property type="chains" value="C=1-769"/>
</dbReference>
<dbReference type="PDB" id="8Z8X">
    <property type="method" value="EM"/>
    <property type="resolution" value="3.06 A"/>
    <property type="chains" value="C=1-769"/>
</dbReference>
<dbReference type="PDB" id="8Z90">
    <property type="method" value="EM"/>
    <property type="resolution" value="2.87 A"/>
    <property type="chains" value="C=1-769"/>
</dbReference>
<dbReference type="PDB" id="8Z97">
    <property type="method" value="EM"/>
    <property type="resolution" value="2.65 A"/>
    <property type="chains" value="C=1-769"/>
</dbReference>
<dbReference type="PDB" id="8Z98">
    <property type="method" value="EM"/>
    <property type="resolution" value="2.52 A"/>
    <property type="chains" value="C=1-769"/>
</dbReference>
<dbReference type="PDB" id="8Z9H">
    <property type="method" value="EM"/>
    <property type="resolution" value="2.70 A"/>
    <property type="chains" value="C/J=1-769"/>
</dbReference>
<dbReference type="PDB" id="8Z9Q">
    <property type="method" value="EM"/>
    <property type="resolution" value="2.33 A"/>
    <property type="chains" value="C=1-769"/>
</dbReference>
<dbReference type="PDB" id="8Z9R">
    <property type="method" value="EM"/>
    <property type="resolution" value="2.58 A"/>
    <property type="chains" value="C/J=1-769"/>
</dbReference>
<dbReference type="PDBsum" id="4CHD"/>
<dbReference type="PDBsum" id="4CHE"/>
<dbReference type="PDBsum" id="4CHF"/>
<dbReference type="PDBsum" id="8P0B"/>
<dbReference type="PDBsum" id="8P0G"/>
<dbReference type="PDBsum" id="8P0U"/>
<dbReference type="PDBsum" id="8Z85"/>
<dbReference type="PDBsum" id="8Z8J"/>
<dbReference type="PDBsum" id="8Z8N"/>
<dbReference type="PDBsum" id="8Z8X"/>
<dbReference type="PDBsum" id="8Z90"/>
<dbReference type="PDBsum" id="8Z97"/>
<dbReference type="PDBsum" id="8Z98"/>
<dbReference type="PDBsum" id="8Z9H"/>
<dbReference type="PDBsum" id="8Z9Q"/>
<dbReference type="PDBsum" id="8Z9R"/>
<dbReference type="EMDB" id="EMD-17332"/>
<dbReference type="EMDB" id="EMD-17333"/>
<dbReference type="EMDB" id="EMD-17338"/>
<dbReference type="EMDB" id="EMD-39838"/>
<dbReference type="EMDB" id="EMD-39848"/>
<dbReference type="EMDB" id="EMD-39849"/>
<dbReference type="EMDB" id="EMD-39850"/>
<dbReference type="EMDB" id="EMD-39852"/>
<dbReference type="EMDB" id="EMD-39855"/>
<dbReference type="EMDB" id="EMD-39856"/>
<dbReference type="EMDB" id="EMD-39862"/>
<dbReference type="EMDB" id="EMD-39867"/>
<dbReference type="EMDB" id="EMD-39868"/>
<dbReference type="SMR" id="Q9YNA4"/>
<dbReference type="KEGG" id="vg:5075739"/>
<dbReference type="EvolutionaryTrace" id="Q9YNA4"/>
<dbReference type="Proteomes" id="UP000008973">
    <property type="component" value="Genome"/>
</dbReference>
<dbReference type="GO" id="GO:0042025">
    <property type="term" value="C:host cell nucleus"/>
    <property type="evidence" value="ECO:0007669"/>
    <property type="project" value="UniProtKB-SubCell"/>
</dbReference>
<dbReference type="GO" id="GO:0044423">
    <property type="term" value="C:virion component"/>
    <property type="evidence" value="ECO:0007669"/>
    <property type="project" value="UniProtKB-KW"/>
</dbReference>
<dbReference type="GO" id="GO:0006370">
    <property type="term" value="P:7-methylguanosine mRNA capping"/>
    <property type="evidence" value="ECO:0007669"/>
    <property type="project" value="UniProtKB-KW"/>
</dbReference>
<dbReference type="GO" id="GO:0075526">
    <property type="term" value="P:cap snatching"/>
    <property type="evidence" value="ECO:0007669"/>
    <property type="project" value="UniProtKB-KW"/>
</dbReference>
<dbReference type="Gene3D" id="3.30.70.3510">
    <property type="match status" value="1"/>
</dbReference>
<dbReference type="InterPro" id="IPR048838">
    <property type="entry name" value="PB2_627_dom"/>
</dbReference>
<dbReference type="InterPro" id="IPR048837">
    <property type="entry name" value="PB2_cap-bd"/>
</dbReference>
<dbReference type="InterPro" id="IPR049113">
    <property type="entry name" value="PB2_helical"/>
</dbReference>
<dbReference type="Pfam" id="PF20950">
    <property type="entry name" value="Flu_PB2_4th"/>
    <property type="match status" value="1"/>
</dbReference>
<dbReference type="Pfam" id="PF21442">
    <property type="entry name" value="PB2_627-dom"/>
    <property type="match status" value="1"/>
</dbReference>
<dbReference type="Pfam" id="PF21490">
    <property type="entry name" value="PB2_cap-binding"/>
    <property type="match status" value="1"/>
</dbReference>
<feature type="chain" id="PRO_0000078849" description="Polymerase basic protein 2">
    <location>
        <begin position="1"/>
        <end position="769"/>
    </location>
</feature>
<feature type="short sequence motif" description="Nuclear localization signal" evidence="1">
    <location>
        <begin position="753"/>
        <end position="756"/>
    </location>
</feature>
<feature type="helix" evidence="12">
    <location>
        <begin position="11"/>
        <end position="26"/>
    </location>
</feature>
<feature type="helix" evidence="12">
    <location>
        <begin position="28"/>
        <end position="31"/>
    </location>
</feature>
<feature type="helix" evidence="12">
    <location>
        <begin position="35"/>
        <end position="37"/>
    </location>
</feature>
<feature type="helix" evidence="12">
    <location>
        <begin position="38"/>
        <end position="41"/>
    </location>
</feature>
<feature type="strand" evidence="9">
    <location>
        <begin position="50"/>
        <end position="52"/>
    </location>
</feature>
<feature type="helix" evidence="8">
    <location>
        <begin position="53"/>
        <end position="55"/>
    </location>
</feature>
<feature type="helix" evidence="8">
    <location>
        <begin position="57"/>
        <end position="61"/>
    </location>
</feature>
<feature type="strand" evidence="8">
    <location>
        <begin position="63"/>
        <end position="65"/>
    </location>
</feature>
<feature type="strand" evidence="12">
    <location>
        <begin position="67"/>
        <end position="69"/>
    </location>
</feature>
<feature type="strand" evidence="8">
    <location>
        <begin position="73"/>
        <end position="75"/>
    </location>
</feature>
<feature type="strand" evidence="8">
    <location>
        <begin position="77"/>
        <end position="81"/>
    </location>
</feature>
<feature type="strand" evidence="10">
    <location>
        <begin position="88"/>
        <end position="90"/>
    </location>
</feature>
<feature type="strand" evidence="13">
    <location>
        <begin position="91"/>
        <end position="95"/>
    </location>
</feature>
<feature type="strand" evidence="12">
    <location>
        <begin position="97"/>
        <end position="99"/>
    </location>
</feature>
<feature type="helix" evidence="8">
    <location>
        <begin position="103"/>
        <end position="110"/>
    </location>
</feature>
<feature type="helix" evidence="8">
    <location>
        <begin position="116"/>
        <end position="122"/>
    </location>
</feature>
<feature type="helix" evidence="8">
    <location>
        <begin position="125"/>
        <end position="135"/>
    </location>
</feature>
<feature type="strand" evidence="12">
    <location>
        <begin position="138"/>
        <end position="144"/>
    </location>
</feature>
<feature type="strand" evidence="12">
    <location>
        <begin position="149"/>
        <end position="154"/>
    </location>
</feature>
<feature type="helix" evidence="13">
    <location>
        <begin position="164"/>
        <end position="166"/>
    </location>
</feature>
<feature type="helix" evidence="12">
    <location>
        <begin position="167"/>
        <end position="175"/>
    </location>
</feature>
<feature type="helix" evidence="13">
    <location>
        <begin position="177"/>
        <end position="179"/>
    </location>
</feature>
<feature type="helix" evidence="12">
    <location>
        <begin position="182"/>
        <end position="186"/>
    </location>
</feature>
<feature type="helix" evidence="12">
    <location>
        <begin position="192"/>
        <end position="200"/>
    </location>
</feature>
<feature type="helix" evidence="12">
    <location>
        <begin position="201"/>
        <end position="203"/>
    </location>
</feature>
<feature type="turn" evidence="13">
    <location>
        <begin position="204"/>
        <end position="206"/>
    </location>
</feature>
<feature type="helix" evidence="12">
    <location>
        <begin position="209"/>
        <end position="220"/>
    </location>
</feature>
<feature type="strand" evidence="12">
    <location>
        <begin position="224"/>
        <end position="231"/>
    </location>
</feature>
<feature type="helix" evidence="12">
    <location>
        <begin position="235"/>
        <end position="238"/>
    </location>
</feature>
<feature type="helix" evidence="12">
    <location>
        <begin position="241"/>
        <end position="244"/>
    </location>
</feature>
<feature type="strand" evidence="12">
    <location>
        <begin position="247"/>
        <end position="253"/>
    </location>
</feature>
<feature type="helix" evidence="13">
    <location>
        <begin position="261"/>
        <end position="275"/>
    </location>
</feature>
<feature type="strand" evidence="13">
    <location>
        <begin position="278"/>
        <end position="280"/>
    </location>
</feature>
<feature type="helix" evidence="13">
    <location>
        <begin position="281"/>
        <end position="289"/>
    </location>
</feature>
<feature type="helix" evidence="13">
    <location>
        <begin position="299"/>
        <end position="305"/>
    </location>
</feature>
<feature type="helix" evidence="13">
    <location>
        <begin position="311"/>
        <end position="319"/>
    </location>
</feature>
<feature type="strand" evidence="7">
    <location>
        <begin position="328"/>
        <end position="330"/>
    </location>
</feature>
<feature type="strand" evidence="7">
    <location>
        <begin position="333"/>
        <end position="342"/>
    </location>
</feature>
<feature type="strand" evidence="7">
    <location>
        <begin position="345"/>
        <end position="354"/>
    </location>
</feature>
<feature type="strand" evidence="7">
    <location>
        <begin position="357"/>
        <end position="365"/>
    </location>
</feature>
<feature type="strand" evidence="7">
    <location>
        <begin position="367"/>
        <end position="376"/>
    </location>
</feature>
<feature type="strand" evidence="7">
    <location>
        <begin position="379"/>
        <end position="386"/>
    </location>
</feature>
<feature type="strand" evidence="7">
    <location>
        <begin position="389"/>
        <end position="396"/>
    </location>
</feature>
<feature type="helix" evidence="7">
    <location>
        <begin position="404"/>
        <end position="414"/>
    </location>
</feature>
<feature type="strand" evidence="7">
    <location>
        <begin position="417"/>
        <end position="423"/>
    </location>
</feature>
<feature type="strand" evidence="7">
    <location>
        <begin position="425"/>
        <end position="427"/>
    </location>
</feature>
<feature type="helix" evidence="7">
    <location>
        <begin position="432"/>
        <end position="445"/>
    </location>
</feature>
<feature type="helix" evidence="7">
    <location>
        <begin position="448"/>
        <end position="454"/>
    </location>
</feature>
<feature type="strand" evidence="7">
    <location>
        <begin position="456"/>
        <end position="458"/>
    </location>
</feature>
<feature type="strand" evidence="7">
    <location>
        <begin position="462"/>
        <end position="464"/>
    </location>
</feature>
<feature type="strand" evidence="13">
    <location>
        <begin position="468"/>
        <end position="471"/>
    </location>
</feature>
<feature type="strand" evidence="7">
    <location>
        <begin position="475"/>
        <end position="478"/>
    </location>
</feature>
<feature type="strand" evidence="7">
    <location>
        <begin position="481"/>
        <end position="483"/>
    </location>
</feature>
<feature type="strand" evidence="13">
    <location>
        <begin position="498"/>
        <end position="500"/>
    </location>
</feature>
<feature type="helix" evidence="10">
    <location>
        <begin position="502"/>
        <end position="504"/>
    </location>
</feature>
<feature type="strand" evidence="13">
    <location>
        <begin position="506"/>
        <end position="510"/>
    </location>
</feature>
<feature type="strand" evidence="13">
    <location>
        <begin position="513"/>
        <end position="518"/>
    </location>
</feature>
<feature type="strand" evidence="11">
    <location>
        <begin position="538"/>
        <end position="540"/>
    </location>
</feature>
<feature type="helix" evidence="10">
    <location>
        <begin position="542"/>
        <end position="544"/>
    </location>
</feature>
<feature type="helix" evidence="6">
    <location>
        <begin position="548"/>
        <end position="560"/>
    </location>
</feature>
<feature type="helix" evidence="6">
    <location>
        <begin position="563"/>
        <end position="575"/>
    </location>
</feature>
<feature type="helix" evidence="6">
    <location>
        <begin position="582"/>
        <end position="588"/>
    </location>
</feature>
<feature type="strand" evidence="6">
    <location>
        <begin position="591"/>
        <end position="593"/>
    </location>
</feature>
<feature type="helix" evidence="6">
    <location>
        <begin position="595"/>
        <end position="608"/>
    </location>
</feature>
<feature type="helix" evidence="6">
    <location>
        <begin position="612"/>
        <end position="614"/>
    </location>
</feature>
<feature type="helix" evidence="6">
    <location>
        <begin position="616"/>
        <end position="629"/>
    </location>
</feature>
<feature type="strand" evidence="13">
    <location>
        <begin position="635"/>
        <end position="637"/>
    </location>
</feature>
<feature type="strand" evidence="6">
    <location>
        <begin position="644"/>
        <end position="647"/>
    </location>
</feature>
<feature type="strand" evidence="6">
    <location>
        <begin position="654"/>
        <end position="656"/>
    </location>
</feature>
<feature type="strand" evidence="6">
    <location>
        <begin position="660"/>
        <end position="667"/>
    </location>
</feature>
<feature type="strand" evidence="6">
    <location>
        <begin position="670"/>
        <end position="673"/>
    </location>
</feature>
<feature type="strand" evidence="6">
    <location>
        <begin position="676"/>
        <end position="680"/>
    </location>
</feature>
<feature type="strand" evidence="13">
    <location>
        <begin position="694"/>
        <end position="697"/>
    </location>
</feature>
<feature type="strand" evidence="13">
    <location>
        <begin position="700"/>
        <end position="703"/>
    </location>
</feature>
<feature type="helix" evidence="13">
    <location>
        <begin position="707"/>
        <end position="713"/>
    </location>
</feature>
<feature type="strand" evidence="13">
    <location>
        <begin position="716"/>
        <end position="724"/>
    </location>
</feature>
<feature type="strand" evidence="13">
    <location>
        <begin position="726"/>
        <end position="729"/>
    </location>
</feature>
<feature type="helix" evidence="13">
    <location>
        <begin position="738"/>
        <end position="753"/>
    </location>
</feature>
<organism>
    <name type="scientific">Thogoto virus (isolate SiAr 126)</name>
    <name type="common">Tho</name>
    <dbReference type="NCBI Taxonomy" id="126796"/>
    <lineage>
        <taxon>Viruses</taxon>
        <taxon>Riboviria</taxon>
        <taxon>Orthornavirae</taxon>
        <taxon>Negarnaviricota</taxon>
        <taxon>Polyploviricotina</taxon>
        <taxon>Insthoviricetes</taxon>
        <taxon>Articulavirales</taxon>
        <taxon>Orthomyxoviridae</taxon>
        <taxon>Thogotovirus</taxon>
        <taxon>Thogotovirus thogotoense</taxon>
    </lineage>
</organism>
<accession>Q9YNA4</accession>
<reference key="1">
    <citation type="journal article" date="1999" name="Arch. Virol.">
        <title>PB2 polymerase subunit of Thogoto virus (Orthomyxoviridae family).</title>
        <authorList>
            <person name="Weber F."/>
            <person name="Gruber S."/>
            <person name="Haller O."/>
            <person name="Kochs G."/>
        </authorList>
    </citation>
    <scope>NUCLEOTIDE SEQUENCE [GENOMIC RNA]</scope>
</reference>
<protein>
    <recommendedName>
        <fullName>Polymerase basic protein 2</fullName>
        <shortName>PB2</shortName>
    </recommendedName>
    <alternativeName>
        <fullName>RNA-directed RNA polymerase subunit P3</fullName>
    </alternativeName>
</protein>
<comment type="function">
    <text evidence="2">subunit of the RNA-dependent RNA polymerase which is responsible for replication and transcription of virus RNA segments. The transcription of viral mRNAs occurs by a unique mechanism called cap-snatching. 5' methylated caps of cellular mRNAs are cleaved after 10-13 nucleotides by PA. In turn, these short capped RNAs are used as primers by PB1 for transcription of viral mRNAs. During virus replication, PB1 initiates RNA synthesis and copy vRNA into complementary RNA (cRNA) which in turn serves as a template for the production of more vRNAs.</text>
</comment>
<comment type="subunit">
    <text evidence="3">RNA polymerase is composed of three subunits: PA, PB1 and PB2.</text>
</comment>
<comment type="subcellular location">
    <subcellularLocation>
        <location>Virion</location>
    </subcellularLocation>
    <subcellularLocation>
        <location evidence="4">Host nucleus</location>
    </subcellularLocation>
</comment>
<comment type="similarity">
    <text evidence="5">Belongs to the influenza viruses PB2 family.</text>
</comment>